<keyword id="KW-0963">Cytoplasm</keyword>
<keyword id="KW-0274">FAD</keyword>
<keyword id="KW-0285">Flavoprotein</keyword>
<keyword id="KW-0520">NAD</keyword>
<keyword id="KW-0819">tRNA processing</keyword>
<protein>
    <recommendedName>
        <fullName evidence="1">tRNA uridine 5-carboxymethylaminomethyl modification enzyme MnmG</fullName>
    </recommendedName>
    <alternativeName>
        <fullName evidence="1">Glucose-inhibited division protein A</fullName>
    </alternativeName>
</protein>
<reference key="1">
    <citation type="submission" date="2006-12" db="EMBL/GenBank/DDBJ databases">
        <title>Complete sequence of Shewanella sp. W3-18-1.</title>
        <authorList>
            <consortium name="US DOE Joint Genome Institute"/>
            <person name="Copeland A."/>
            <person name="Lucas S."/>
            <person name="Lapidus A."/>
            <person name="Barry K."/>
            <person name="Detter J.C."/>
            <person name="Glavina del Rio T."/>
            <person name="Hammon N."/>
            <person name="Israni S."/>
            <person name="Dalin E."/>
            <person name="Tice H."/>
            <person name="Pitluck S."/>
            <person name="Chain P."/>
            <person name="Malfatti S."/>
            <person name="Shin M."/>
            <person name="Vergez L."/>
            <person name="Schmutz J."/>
            <person name="Larimer F."/>
            <person name="Land M."/>
            <person name="Hauser L."/>
            <person name="Kyrpides N."/>
            <person name="Lykidis A."/>
            <person name="Tiedje J."/>
            <person name="Richardson P."/>
        </authorList>
    </citation>
    <scope>NUCLEOTIDE SEQUENCE [LARGE SCALE GENOMIC DNA]</scope>
    <source>
        <strain>W3-18-1</strain>
    </source>
</reference>
<sequence length="629" mass="69344">MHFHERFDVIVVGGGHAGTEAALAAARMGSKTLLLTHNIDTLGQMSCNPAIGGIGKGHLVKEIDALGGAMAIATDYAGIQFRTLNSSKGPAVRATRAQADRALYRQKIQNILQNQANLRIFQQAVDDLIVENDRVVGVVTQMGLAFESPAIVLTTGTFLSGKIHIGLENYSGGRAGDPPAIALANRLRELPIRVGRLKTGTPPRIDANTIDFSQMAEQKGDSPLPVMSFMGDVSHHPKQISCWITHTNEKTHEIIRGGLDRSPMYSGVIEGIGPRYCPSIEDKIHRFSDKSSHQIFIEPEGLNTTEIYPNGISTSLPFDVQLNLVRSIKGMENAEIVRPGYAIEYDYFDPRDLKNSLETKTINGLFFAGQINGTTGYEEAAAQGLLAGMNASLQVQGKDAWCPRRDEAYLGVLVDDLSTLGTKEPYRMFTSRAEYRLLLREDNADIRLTAKGRELGLVDDIRWAAFSEKLESIELELQRLRAQWVHPNSPLIHALNPHLNTPISREASFEELLRRPEMDYSKLMQIEGFGPGLEDPLAAEQVQIQVKYSGYIQRQQEEINKAVRNENTGLPLHLDYKEVPGLSNEVIAKLNSHKPETIGQASRISGVTPAAISILLVHLKKRGLLRKSA</sequence>
<evidence type="ECO:0000255" key="1">
    <source>
        <dbReference type="HAMAP-Rule" id="MF_00129"/>
    </source>
</evidence>
<gene>
    <name evidence="1" type="primary">mnmG</name>
    <name evidence="1" type="synonym">gidA</name>
    <name type="ordered locus">Sputw3181_4064</name>
</gene>
<dbReference type="EMBL" id="CP000503">
    <property type="protein sequence ID" value="ABM26866.1"/>
    <property type="molecule type" value="Genomic_DNA"/>
</dbReference>
<dbReference type="RefSeq" id="WP_011791287.1">
    <property type="nucleotide sequence ID" value="NC_008750.1"/>
</dbReference>
<dbReference type="SMR" id="A1RQC1"/>
<dbReference type="KEGG" id="shw:Sputw3181_4064"/>
<dbReference type="HOGENOM" id="CLU_007831_2_2_6"/>
<dbReference type="Proteomes" id="UP000002597">
    <property type="component" value="Chromosome"/>
</dbReference>
<dbReference type="GO" id="GO:0005829">
    <property type="term" value="C:cytosol"/>
    <property type="evidence" value="ECO:0007669"/>
    <property type="project" value="TreeGrafter"/>
</dbReference>
<dbReference type="GO" id="GO:0050660">
    <property type="term" value="F:flavin adenine dinucleotide binding"/>
    <property type="evidence" value="ECO:0007669"/>
    <property type="project" value="UniProtKB-UniRule"/>
</dbReference>
<dbReference type="GO" id="GO:0030488">
    <property type="term" value="P:tRNA methylation"/>
    <property type="evidence" value="ECO:0007669"/>
    <property type="project" value="TreeGrafter"/>
</dbReference>
<dbReference type="GO" id="GO:0002098">
    <property type="term" value="P:tRNA wobble uridine modification"/>
    <property type="evidence" value="ECO:0007669"/>
    <property type="project" value="InterPro"/>
</dbReference>
<dbReference type="FunFam" id="1.10.10.1800:FF:000001">
    <property type="entry name" value="tRNA uridine 5-carboxymethylaminomethyl modification enzyme MnmG"/>
    <property type="match status" value="1"/>
</dbReference>
<dbReference type="FunFam" id="1.10.150.570:FF:000001">
    <property type="entry name" value="tRNA uridine 5-carboxymethylaminomethyl modification enzyme MnmG"/>
    <property type="match status" value="1"/>
</dbReference>
<dbReference type="FunFam" id="3.50.50.60:FF:000002">
    <property type="entry name" value="tRNA uridine 5-carboxymethylaminomethyl modification enzyme MnmG"/>
    <property type="match status" value="1"/>
</dbReference>
<dbReference type="FunFam" id="3.50.50.60:FF:000010">
    <property type="entry name" value="tRNA uridine 5-carboxymethylaminomethyl modification enzyme MnmG"/>
    <property type="match status" value="1"/>
</dbReference>
<dbReference type="Gene3D" id="3.50.50.60">
    <property type="entry name" value="FAD/NAD(P)-binding domain"/>
    <property type="match status" value="2"/>
</dbReference>
<dbReference type="Gene3D" id="1.10.150.570">
    <property type="entry name" value="GidA associated domain, C-terminal subdomain"/>
    <property type="match status" value="1"/>
</dbReference>
<dbReference type="Gene3D" id="1.10.10.1800">
    <property type="entry name" value="tRNA uridine 5-carboxymethylaminomethyl modification enzyme MnmG/GidA"/>
    <property type="match status" value="1"/>
</dbReference>
<dbReference type="HAMAP" id="MF_00129">
    <property type="entry name" value="MnmG_GidA"/>
    <property type="match status" value="1"/>
</dbReference>
<dbReference type="InterPro" id="IPR036188">
    <property type="entry name" value="FAD/NAD-bd_sf"/>
</dbReference>
<dbReference type="InterPro" id="IPR049312">
    <property type="entry name" value="GIDA_C_N"/>
</dbReference>
<dbReference type="InterPro" id="IPR004416">
    <property type="entry name" value="MnmG"/>
</dbReference>
<dbReference type="InterPro" id="IPR002218">
    <property type="entry name" value="MnmG-rel"/>
</dbReference>
<dbReference type="InterPro" id="IPR020595">
    <property type="entry name" value="MnmG-rel_CS"/>
</dbReference>
<dbReference type="InterPro" id="IPR026904">
    <property type="entry name" value="MnmG_C"/>
</dbReference>
<dbReference type="InterPro" id="IPR047001">
    <property type="entry name" value="MnmG_C_subdom"/>
</dbReference>
<dbReference type="InterPro" id="IPR044920">
    <property type="entry name" value="MnmG_C_subdom_sf"/>
</dbReference>
<dbReference type="InterPro" id="IPR040131">
    <property type="entry name" value="MnmG_N"/>
</dbReference>
<dbReference type="NCBIfam" id="TIGR00136">
    <property type="entry name" value="mnmG_gidA"/>
    <property type="match status" value="1"/>
</dbReference>
<dbReference type="PANTHER" id="PTHR11806">
    <property type="entry name" value="GLUCOSE INHIBITED DIVISION PROTEIN A"/>
    <property type="match status" value="1"/>
</dbReference>
<dbReference type="PANTHER" id="PTHR11806:SF0">
    <property type="entry name" value="PROTEIN MTO1 HOMOLOG, MITOCHONDRIAL"/>
    <property type="match status" value="1"/>
</dbReference>
<dbReference type="Pfam" id="PF01134">
    <property type="entry name" value="GIDA"/>
    <property type="match status" value="1"/>
</dbReference>
<dbReference type="Pfam" id="PF21680">
    <property type="entry name" value="GIDA_C_1st"/>
    <property type="match status" value="1"/>
</dbReference>
<dbReference type="Pfam" id="PF13932">
    <property type="entry name" value="SAM_GIDA_C"/>
    <property type="match status" value="1"/>
</dbReference>
<dbReference type="SMART" id="SM01228">
    <property type="entry name" value="GIDA_assoc_3"/>
    <property type="match status" value="1"/>
</dbReference>
<dbReference type="SUPFAM" id="SSF51905">
    <property type="entry name" value="FAD/NAD(P)-binding domain"/>
    <property type="match status" value="1"/>
</dbReference>
<dbReference type="PROSITE" id="PS01280">
    <property type="entry name" value="GIDA_1"/>
    <property type="match status" value="1"/>
</dbReference>
<dbReference type="PROSITE" id="PS01281">
    <property type="entry name" value="GIDA_2"/>
    <property type="match status" value="1"/>
</dbReference>
<feature type="chain" id="PRO_1000016678" description="tRNA uridine 5-carboxymethylaminomethyl modification enzyme MnmG">
    <location>
        <begin position="1"/>
        <end position="629"/>
    </location>
</feature>
<feature type="binding site" evidence="1">
    <location>
        <begin position="13"/>
        <end position="18"/>
    </location>
    <ligand>
        <name>FAD</name>
        <dbReference type="ChEBI" id="CHEBI:57692"/>
    </ligand>
</feature>
<feature type="binding site" evidence="1">
    <location>
        <begin position="273"/>
        <end position="287"/>
    </location>
    <ligand>
        <name>NAD(+)</name>
        <dbReference type="ChEBI" id="CHEBI:57540"/>
    </ligand>
</feature>
<proteinExistence type="inferred from homology"/>
<comment type="function">
    <text evidence="1">NAD-binding protein involved in the addition of a carboxymethylaminomethyl (cmnm) group at the wobble position (U34) of certain tRNAs, forming tRNA-cmnm(5)s(2)U34.</text>
</comment>
<comment type="cofactor">
    <cofactor evidence="1">
        <name>FAD</name>
        <dbReference type="ChEBI" id="CHEBI:57692"/>
    </cofactor>
</comment>
<comment type="subunit">
    <text evidence="1">Homodimer. Heterotetramer of two MnmE and two MnmG subunits.</text>
</comment>
<comment type="subcellular location">
    <subcellularLocation>
        <location evidence="1">Cytoplasm</location>
    </subcellularLocation>
</comment>
<comment type="similarity">
    <text evidence="1">Belongs to the MnmG family.</text>
</comment>
<name>MNMG_SHESW</name>
<accession>A1RQC1</accession>
<organism>
    <name type="scientific">Shewanella sp. (strain W3-18-1)</name>
    <dbReference type="NCBI Taxonomy" id="351745"/>
    <lineage>
        <taxon>Bacteria</taxon>
        <taxon>Pseudomonadati</taxon>
        <taxon>Pseudomonadota</taxon>
        <taxon>Gammaproteobacteria</taxon>
        <taxon>Alteromonadales</taxon>
        <taxon>Shewanellaceae</taxon>
        <taxon>Shewanella</taxon>
    </lineage>
</organism>